<name>GATC_STRR6</name>
<proteinExistence type="inferred from homology"/>
<feature type="chain" id="PRO_0000105344" description="Glutamyl-tRNA(Gln) amidotransferase subunit C">
    <location>
        <begin position="1"/>
        <end position="100"/>
    </location>
</feature>
<evidence type="ECO:0000250" key="1"/>
<evidence type="ECO:0000305" key="2"/>
<reference key="1">
    <citation type="journal article" date="2001" name="J. Bacteriol.">
        <title>Genome of the bacterium Streptococcus pneumoniae strain R6.</title>
        <authorList>
            <person name="Hoskins J."/>
            <person name="Alborn W.E. Jr."/>
            <person name="Arnold J."/>
            <person name="Blaszczak L.C."/>
            <person name="Burgett S."/>
            <person name="DeHoff B.S."/>
            <person name="Estrem S.T."/>
            <person name="Fritz L."/>
            <person name="Fu D.-J."/>
            <person name="Fuller W."/>
            <person name="Geringer C."/>
            <person name="Gilmour R."/>
            <person name="Glass J.S."/>
            <person name="Khoja H."/>
            <person name="Kraft A.R."/>
            <person name="Lagace R.E."/>
            <person name="LeBlanc D.J."/>
            <person name="Lee L.N."/>
            <person name="Lefkowitz E.J."/>
            <person name="Lu J."/>
            <person name="Matsushima P."/>
            <person name="McAhren S.M."/>
            <person name="McHenney M."/>
            <person name="McLeaster K."/>
            <person name="Mundy C.W."/>
            <person name="Nicas T.I."/>
            <person name="Norris F.H."/>
            <person name="O'Gara M."/>
            <person name="Peery R.B."/>
            <person name="Robertson G.T."/>
            <person name="Rockey P."/>
            <person name="Sun P.-M."/>
            <person name="Winkler M.E."/>
            <person name="Yang Y."/>
            <person name="Young-Bellido M."/>
            <person name="Zhao G."/>
            <person name="Zook C.A."/>
            <person name="Baltz R.H."/>
            <person name="Jaskunas S.R."/>
            <person name="Rosteck P.R. Jr."/>
            <person name="Skatrud P.L."/>
            <person name="Glass J.I."/>
        </authorList>
    </citation>
    <scope>NUCLEOTIDE SEQUENCE [LARGE SCALE GENOMIC DNA]</scope>
    <source>
        <strain>ATCC BAA-255 / R6</strain>
    </source>
</reference>
<organism>
    <name type="scientific">Streptococcus pneumoniae (strain ATCC BAA-255 / R6)</name>
    <dbReference type="NCBI Taxonomy" id="171101"/>
    <lineage>
        <taxon>Bacteria</taxon>
        <taxon>Bacillati</taxon>
        <taxon>Bacillota</taxon>
        <taxon>Bacilli</taxon>
        <taxon>Lactobacillales</taxon>
        <taxon>Streptococcaceae</taxon>
        <taxon>Streptococcus</taxon>
    </lineage>
</organism>
<keyword id="KW-0067">ATP-binding</keyword>
<keyword id="KW-0436">Ligase</keyword>
<keyword id="KW-0547">Nucleotide-binding</keyword>
<keyword id="KW-0648">Protein biosynthesis</keyword>
<keyword id="KW-1185">Reference proteome</keyword>
<gene>
    <name type="primary">gatC</name>
    <name type="ordered locus">spr0395</name>
</gene>
<protein>
    <recommendedName>
        <fullName>Glutamyl-tRNA(Gln) amidotransferase subunit C</fullName>
        <shortName>Glu-ADT subunit C</shortName>
        <ecNumber>6.3.5.-</ecNumber>
    </recommendedName>
</protein>
<sequence>MKITQEEVTHVANLSKLRFSEEETAAFATTLSKIVDMVELLGEVDTTGVAPTTTMADRKTVLRPDVAEEGTDRDRLFKNVPEQDNYYIKVPAILDDGGDA</sequence>
<accession>P59661</accession>
<comment type="function">
    <text evidence="1">Allows the formation of correctly charged Asn-tRNA(Asn) or Gln-tRNA(Gln) through the transamidation of misacylated Asp-tRNA(Asn) or Glu-tRNA(Gln) in organisms which lack either or both of asparaginyl-tRNA or glutaminyl-tRNA synthetases. The reaction takes place in the presence of glutamine and ATP through an activated phospho-Asp-tRNA(Asn) or phospho-Glu-tRNA(Gln) (By similarity).</text>
</comment>
<comment type="catalytic activity">
    <reaction>
        <text>L-glutamyl-tRNA(Gln) + L-glutamine + ATP + H2O = L-glutaminyl-tRNA(Gln) + L-glutamate + ADP + phosphate + H(+)</text>
        <dbReference type="Rhea" id="RHEA:17521"/>
        <dbReference type="Rhea" id="RHEA-COMP:9681"/>
        <dbReference type="Rhea" id="RHEA-COMP:9684"/>
        <dbReference type="ChEBI" id="CHEBI:15377"/>
        <dbReference type="ChEBI" id="CHEBI:15378"/>
        <dbReference type="ChEBI" id="CHEBI:29985"/>
        <dbReference type="ChEBI" id="CHEBI:30616"/>
        <dbReference type="ChEBI" id="CHEBI:43474"/>
        <dbReference type="ChEBI" id="CHEBI:58359"/>
        <dbReference type="ChEBI" id="CHEBI:78520"/>
        <dbReference type="ChEBI" id="CHEBI:78521"/>
        <dbReference type="ChEBI" id="CHEBI:456216"/>
    </reaction>
</comment>
<comment type="catalytic activity">
    <reaction>
        <text>L-aspartyl-tRNA(Asn) + L-glutamine + ATP + H2O = L-asparaginyl-tRNA(Asn) + L-glutamate + ADP + phosphate + 2 H(+)</text>
        <dbReference type="Rhea" id="RHEA:14513"/>
        <dbReference type="Rhea" id="RHEA-COMP:9674"/>
        <dbReference type="Rhea" id="RHEA-COMP:9677"/>
        <dbReference type="ChEBI" id="CHEBI:15377"/>
        <dbReference type="ChEBI" id="CHEBI:15378"/>
        <dbReference type="ChEBI" id="CHEBI:29985"/>
        <dbReference type="ChEBI" id="CHEBI:30616"/>
        <dbReference type="ChEBI" id="CHEBI:43474"/>
        <dbReference type="ChEBI" id="CHEBI:58359"/>
        <dbReference type="ChEBI" id="CHEBI:78515"/>
        <dbReference type="ChEBI" id="CHEBI:78516"/>
        <dbReference type="ChEBI" id="CHEBI:456216"/>
    </reaction>
</comment>
<comment type="subunit">
    <text evidence="1">Heterotrimer of A, B and C subunits.</text>
</comment>
<comment type="similarity">
    <text evidence="2">Belongs to the GatC family.</text>
</comment>
<dbReference type="EC" id="6.3.5.-"/>
<dbReference type="EMBL" id="AE007317">
    <property type="protein sequence ID" value="AAK99199.1"/>
    <property type="molecule type" value="Genomic_DNA"/>
</dbReference>
<dbReference type="PIR" id="C97921">
    <property type="entry name" value="C97921"/>
</dbReference>
<dbReference type="RefSeq" id="NP_357989.1">
    <property type="nucleotide sequence ID" value="NC_003098.1"/>
</dbReference>
<dbReference type="RefSeq" id="WP_000705421.1">
    <property type="nucleotide sequence ID" value="NC_003098.1"/>
</dbReference>
<dbReference type="SMR" id="P59661"/>
<dbReference type="STRING" id="171101.spr0395"/>
<dbReference type="KEGG" id="spr:spr0395"/>
<dbReference type="PATRIC" id="fig|171101.6.peg.438"/>
<dbReference type="eggNOG" id="COG0721">
    <property type="taxonomic scope" value="Bacteria"/>
</dbReference>
<dbReference type="HOGENOM" id="CLU_105899_1_2_9"/>
<dbReference type="Proteomes" id="UP000000586">
    <property type="component" value="Chromosome"/>
</dbReference>
<dbReference type="GO" id="GO:0050566">
    <property type="term" value="F:asparaginyl-tRNA synthase (glutamine-hydrolyzing) activity"/>
    <property type="evidence" value="ECO:0007669"/>
    <property type="project" value="RHEA"/>
</dbReference>
<dbReference type="GO" id="GO:0005524">
    <property type="term" value="F:ATP binding"/>
    <property type="evidence" value="ECO:0007669"/>
    <property type="project" value="UniProtKB-KW"/>
</dbReference>
<dbReference type="GO" id="GO:0050567">
    <property type="term" value="F:glutaminyl-tRNA synthase (glutamine-hydrolyzing) activity"/>
    <property type="evidence" value="ECO:0007669"/>
    <property type="project" value="UniProtKB-UniRule"/>
</dbReference>
<dbReference type="GO" id="GO:0070681">
    <property type="term" value="P:glutaminyl-tRNAGln biosynthesis via transamidation"/>
    <property type="evidence" value="ECO:0000318"/>
    <property type="project" value="GO_Central"/>
</dbReference>
<dbReference type="GO" id="GO:0006450">
    <property type="term" value="P:regulation of translational fidelity"/>
    <property type="evidence" value="ECO:0007669"/>
    <property type="project" value="InterPro"/>
</dbReference>
<dbReference type="GO" id="GO:0006412">
    <property type="term" value="P:translation"/>
    <property type="evidence" value="ECO:0007669"/>
    <property type="project" value="UniProtKB-UniRule"/>
</dbReference>
<dbReference type="Gene3D" id="1.10.20.60">
    <property type="entry name" value="Glu-tRNAGln amidotransferase C subunit, N-terminal domain"/>
    <property type="match status" value="1"/>
</dbReference>
<dbReference type="HAMAP" id="MF_00122">
    <property type="entry name" value="GatC"/>
    <property type="match status" value="1"/>
</dbReference>
<dbReference type="InterPro" id="IPR036113">
    <property type="entry name" value="Asp/Glu-ADT_sf_sub_c"/>
</dbReference>
<dbReference type="InterPro" id="IPR003837">
    <property type="entry name" value="GatC"/>
</dbReference>
<dbReference type="NCBIfam" id="TIGR00135">
    <property type="entry name" value="gatC"/>
    <property type="match status" value="1"/>
</dbReference>
<dbReference type="PANTHER" id="PTHR15004">
    <property type="entry name" value="GLUTAMYL-TRNA(GLN) AMIDOTRANSFERASE SUBUNIT C, MITOCHONDRIAL"/>
    <property type="match status" value="1"/>
</dbReference>
<dbReference type="PANTHER" id="PTHR15004:SF0">
    <property type="entry name" value="GLUTAMYL-TRNA(GLN) AMIDOTRANSFERASE SUBUNIT C, MITOCHONDRIAL"/>
    <property type="match status" value="1"/>
</dbReference>
<dbReference type="Pfam" id="PF02686">
    <property type="entry name" value="GatC"/>
    <property type="match status" value="1"/>
</dbReference>
<dbReference type="SUPFAM" id="SSF141000">
    <property type="entry name" value="Glu-tRNAGln amidotransferase C subunit"/>
    <property type="match status" value="1"/>
</dbReference>